<feature type="chain" id="PRO_0000253702" description="UDP-3-O-acyl-N-acetylglucosamine deacetylase">
    <location>
        <begin position="1"/>
        <end position="303"/>
    </location>
</feature>
<feature type="active site" description="Proton donor" evidence="1">
    <location>
        <position position="264"/>
    </location>
</feature>
<feature type="binding site" evidence="1">
    <location>
        <position position="78"/>
    </location>
    <ligand>
        <name>Zn(2+)</name>
        <dbReference type="ChEBI" id="CHEBI:29105"/>
    </ligand>
</feature>
<feature type="binding site" evidence="1">
    <location>
        <position position="237"/>
    </location>
    <ligand>
        <name>Zn(2+)</name>
        <dbReference type="ChEBI" id="CHEBI:29105"/>
    </ligand>
</feature>
<feature type="binding site" evidence="1">
    <location>
        <position position="241"/>
    </location>
    <ligand>
        <name>Zn(2+)</name>
        <dbReference type="ChEBI" id="CHEBI:29105"/>
    </ligand>
</feature>
<comment type="function">
    <text evidence="1">Catalyzes the hydrolysis of UDP-3-O-myristoyl-N-acetylglucosamine to form UDP-3-O-myristoylglucosamine and acetate, the committed step in lipid A biosynthesis.</text>
</comment>
<comment type="catalytic activity">
    <reaction evidence="1">
        <text>a UDP-3-O-[(3R)-3-hydroxyacyl]-N-acetyl-alpha-D-glucosamine + H2O = a UDP-3-O-[(3R)-3-hydroxyacyl]-alpha-D-glucosamine + acetate</text>
        <dbReference type="Rhea" id="RHEA:67816"/>
        <dbReference type="ChEBI" id="CHEBI:15377"/>
        <dbReference type="ChEBI" id="CHEBI:30089"/>
        <dbReference type="ChEBI" id="CHEBI:137740"/>
        <dbReference type="ChEBI" id="CHEBI:173225"/>
        <dbReference type="EC" id="3.5.1.108"/>
    </reaction>
</comment>
<comment type="cofactor">
    <cofactor evidence="1">
        <name>Zn(2+)</name>
        <dbReference type="ChEBI" id="CHEBI:29105"/>
    </cofactor>
</comment>
<comment type="pathway">
    <text evidence="1">Glycolipid biosynthesis; lipid IV(A) biosynthesis; lipid IV(A) from (3R)-3-hydroxytetradecanoyl-[acyl-carrier-protein] and UDP-N-acetyl-alpha-D-glucosamine: step 2/6.</text>
</comment>
<comment type="similarity">
    <text evidence="1">Belongs to the LpxC family.</text>
</comment>
<keyword id="KW-0378">Hydrolase</keyword>
<keyword id="KW-0441">Lipid A biosynthesis</keyword>
<keyword id="KW-0444">Lipid biosynthesis</keyword>
<keyword id="KW-0443">Lipid metabolism</keyword>
<keyword id="KW-0479">Metal-binding</keyword>
<keyword id="KW-0862">Zinc</keyword>
<gene>
    <name evidence="1" type="primary">lpxC</name>
    <name type="ordered locus">XC_3504</name>
</gene>
<protein>
    <recommendedName>
        <fullName evidence="1">UDP-3-O-acyl-N-acetylglucosamine deacetylase</fullName>
        <shortName evidence="1">UDP-3-O-acyl-GlcNAc deacetylase</shortName>
        <ecNumber evidence="1">3.5.1.108</ecNumber>
    </recommendedName>
    <alternativeName>
        <fullName evidence="1">UDP-3-O-[R-3-hydroxymyristoyl]-N-acetylglucosamine deacetylase</fullName>
    </alternativeName>
</protein>
<proteinExistence type="inferred from homology"/>
<sequence length="303" mass="33556">MTQQRTLKNTIRATGVGLHSGDKVYMTLRPAPVDHGIVFRRVDLEPVVEVPADAELVTETTLCTGLTCNGAKIQTVEHLMSALAGLGVDNVIVELSSAELPIMDGSSGPFVFLLQSAGIVEQNKAKRFIRIKQPVEVREGDKVARFEPYEGYKLGFTIEFNHPMIPAKQSRQEIEFSTSAYVKEISRARTFGFMRDLEYMRERNLGLGGSMDNAIVLDEFRVLNEDGLRYTNEFVRHKILDAIGDLYLAGGAILGAYEGFKSGHALNNKLVRALLADQAAWEWVSFPEGTEQPPVTYASPVYA</sequence>
<organism>
    <name type="scientific">Xanthomonas campestris pv. campestris (strain 8004)</name>
    <dbReference type="NCBI Taxonomy" id="314565"/>
    <lineage>
        <taxon>Bacteria</taxon>
        <taxon>Pseudomonadati</taxon>
        <taxon>Pseudomonadota</taxon>
        <taxon>Gammaproteobacteria</taxon>
        <taxon>Lysobacterales</taxon>
        <taxon>Lysobacteraceae</taxon>
        <taxon>Xanthomonas</taxon>
    </lineage>
</organism>
<dbReference type="EC" id="3.5.1.108" evidence="1"/>
<dbReference type="EMBL" id="CP000050">
    <property type="protein sequence ID" value="AAY50547.1"/>
    <property type="molecule type" value="Genomic_DNA"/>
</dbReference>
<dbReference type="RefSeq" id="WP_011035967.1">
    <property type="nucleotide sequence ID" value="NZ_CP155948.1"/>
</dbReference>
<dbReference type="SMR" id="Q4UQX6"/>
<dbReference type="KEGG" id="xcb:XC_3504"/>
<dbReference type="HOGENOM" id="CLU_046528_1_0_6"/>
<dbReference type="UniPathway" id="UPA00359">
    <property type="reaction ID" value="UER00478"/>
</dbReference>
<dbReference type="Proteomes" id="UP000000420">
    <property type="component" value="Chromosome"/>
</dbReference>
<dbReference type="GO" id="GO:0016020">
    <property type="term" value="C:membrane"/>
    <property type="evidence" value="ECO:0007669"/>
    <property type="project" value="GOC"/>
</dbReference>
<dbReference type="GO" id="GO:0046872">
    <property type="term" value="F:metal ion binding"/>
    <property type="evidence" value="ECO:0007669"/>
    <property type="project" value="UniProtKB-KW"/>
</dbReference>
<dbReference type="GO" id="GO:0103117">
    <property type="term" value="F:UDP-3-O-acyl-N-acetylglucosamine deacetylase activity"/>
    <property type="evidence" value="ECO:0007669"/>
    <property type="project" value="UniProtKB-UniRule"/>
</dbReference>
<dbReference type="GO" id="GO:0009245">
    <property type="term" value="P:lipid A biosynthetic process"/>
    <property type="evidence" value="ECO:0007669"/>
    <property type="project" value="UniProtKB-UniRule"/>
</dbReference>
<dbReference type="Gene3D" id="3.30.230.20">
    <property type="entry name" value="lpxc deacetylase, domain 1"/>
    <property type="match status" value="1"/>
</dbReference>
<dbReference type="Gene3D" id="3.30.1700.10">
    <property type="entry name" value="lpxc deacetylase, domain 2"/>
    <property type="match status" value="1"/>
</dbReference>
<dbReference type="HAMAP" id="MF_00388">
    <property type="entry name" value="LpxC"/>
    <property type="match status" value="1"/>
</dbReference>
<dbReference type="InterPro" id="IPR020568">
    <property type="entry name" value="Ribosomal_Su5_D2-typ_SF"/>
</dbReference>
<dbReference type="InterPro" id="IPR004463">
    <property type="entry name" value="UDP-acyl_GlcNac_deAcase"/>
</dbReference>
<dbReference type="InterPro" id="IPR011334">
    <property type="entry name" value="UDP-acyl_GlcNac_deAcase_C"/>
</dbReference>
<dbReference type="InterPro" id="IPR015870">
    <property type="entry name" value="UDP-acyl_N-AcGlcN_deAcase_N"/>
</dbReference>
<dbReference type="NCBIfam" id="TIGR00325">
    <property type="entry name" value="lpxC"/>
    <property type="match status" value="1"/>
</dbReference>
<dbReference type="PANTHER" id="PTHR33694">
    <property type="entry name" value="UDP-3-O-ACYL-N-ACETYLGLUCOSAMINE DEACETYLASE 1, MITOCHONDRIAL-RELATED"/>
    <property type="match status" value="1"/>
</dbReference>
<dbReference type="PANTHER" id="PTHR33694:SF1">
    <property type="entry name" value="UDP-3-O-ACYL-N-ACETYLGLUCOSAMINE DEACETYLASE 1, MITOCHONDRIAL-RELATED"/>
    <property type="match status" value="1"/>
</dbReference>
<dbReference type="Pfam" id="PF03331">
    <property type="entry name" value="LpxC"/>
    <property type="match status" value="1"/>
</dbReference>
<dbReference type="SUPFAM" id="SSF54211">
    <property type="entry name" value="Ribosomal protein S5 domain 2-like"/>
    <property type="match status" value="2"/>
</dbReference>
<name>LPXC_XANC8</name>
<accession>Q4UQX6</accession>
<evidence type="ECO:0000255" key="1">
    <source>
        <dbReference type="HAMAP-Rule" id="MF_00388"/>
    </source>
</evidence>
<reference key="1">
    <citation type="journal article" date="2005" name="Genome Res.">
        <title>Comparative and functional genomic analyses of the pathogenicity of phytopathogen Xanthomonas campestris pv. campestris.</title>
        <authorList>
            <person name="Qian W."/>
            <person name="Jia Y."/>
            <person name="Ren S.-X."/>
            <person name="He Y.-Q."/>
            <person name="Feng J.-X."/>
            <person name="Lu L.-F."/>
            <person name="Sun Q."/>
            <person name="Ying G."/>
            <person name="Tang D.-J."/>
            <person name="Tang H."/>
            <person name="Wu W."/>
            <person name="Hao P."/>
            <person name="Wang L."/>
            <person name="Jiang B.-L."/>
            <person name="Zeng S."/>
            <person name="Gu W.-Y."/>
            <person name="Lu G."/>
            <person name="Rong L."/>
            <person name="Tian Y."/>
            <person name="Yao Z."/>
            <person name="Fu G."/>
            <person name="Chen B."/>
            <person name="Fang R."/>
            <person name="Qiang B."/>
            <person name="Chen Z."/>
            <person name="Zhao G.-P."/>
            <person name="Tang J.-L."/>
            <person name="He C."/>
        </authorList>
    </citation>
    <scope>NUCLEOTIDE SEQUENCE [LARGE SCALE GENOMIC DNA]</scope>
    <source>
        <strain>8004</strain>
    </source>
</reference>